<evidence type="ECO:0000250" key="1"/>
<evidence type="ECO:0000255" key="2">
    <source>
        <dbReference type="HAMAP-Rule" id="MF_00403"/>
    </source>
</evidence>
<evidence type="ECO:0000305" key="3"/>
<protein>
    <recommendedName>
        <fullName evidence="2">Small ribosomal subunit protein uS12</fullName>
    </recommendedName>
    <alternativeName>
        <fullName evidence="3">30S ribosomal protein S12</fullName>
    </alternativeName>
</protein>
<dbReference type="EMBL" id="CU928145">
    <property type="protein sequence ID" value="CAV00054.1"/>
    <property type="molecule type" value="Genomic_DNA"/>
</dbReference>
<dbReference type="RefSeq" id="WP_000246815.1">
    <property type="nucleotide sequence ID" value="NZ_CP028304.1"/>
</dbReference>
<dbReference type="SMR" id="B7L4L7"/>
<dbReference type="GeneID" id="98390450"/>
<dbReference type="KEGG" id="eck:EC55989_3745"/>
<dbReference type="HOGENOM" id="CLU_104295_1_2_6"/>
<dbReference type="Proteomes" id="UP000000746">
    <property type="component" value="Chromosome"/>
</dbReference>
<dbReference type="GO" id="GO:0015935">
    <property type="term" value="C:small ribosomal subunit"/>
    <property type="evidence" value="ECO:0007669"/>
    <property type="project" value="InterPro"/>
</dbReference>
<dbReference type="GO" id="GO:0019843">
    <property type="term" value="F:rRNA binding"/>
    <property type="evidence" value="ECO:0007669"/>
    <property type="project" value="UniProtKB-UniRule"/>
</dbReference>
<dbReference type="GO" id="GO:0003735">
    <property type="term" value="F:structural constituent of ribosome"/>
    <property type="evidence" value="ECO:0007669"/>
    <property type="project" value="InterPro"/>
</dbReference>
<dbReference type="GO" id="GO:0000049">
    <property type="term" value="F:tRNA binding"/>
    <property type="evidence" value="ECO:0007669"/>
    <property type="project" value="UniProtKB-UniRule"/>
</dbReference>
<dbReference type="GO" id="GO:0006412">
    <property type="term" value="P:translation"/>
    <property type="evidence" value="ECO:0007669"/>
    <property type="project" value="UniProtKB-UniRule"/>
</dbReference>
<dbReference type="CDD" id="cd03368">
    <property type="entry name" value="Ribosomal_S12"/>
    <property type="match status" value="1"/>
</dbReference>
<dbReference type="FunFam" id="2.40.50.140:FF:000001">
    <property type="entry name" value="30S ribosomal protein S12"/>
    <property type="match status" value="1"/>
</dbReference>
<dbReference type="Gene3D" id="2.40.50.140">
    <property type="entry name" value="Nucleic acid-binding proteins"/>
    <property type="match status" value="1"/>
</dbReference>
<dbReference type="HAMAP" id="MF_00403_B">
    <property type="entry name" value="Ribosomal_uS12_B"/>
    <property type="match status" value="1"/>
</dbReference>
<dbReference type="InterPro" id="IPR012340">
    <property type="entry name" value="NA-bd_OB-fold"/>
</dbReference>
<dbReference type="InterPro" id="IPR006032">
    <property type="entry name" value="Ribosomal_uS12"/>
</dbReference>
<dbReference type="InterPro" id="IPR005679">
    <property type="entry name" value="Ribosomal_uS12_bac"/>
</dbReference>
<dbReference type="NCBIfam" id="TIGR00981">
    <property type="entry name" value="rpsL_bact"/>
    <property type="match status" value="1"/>
</dbReference>
<dbReference type="PANTHER" id="PTHR11652">
    <property type="entry name" value="30S RIBOSOMAL PROTEIN S12 FAMILY MEMBER"/>
    <property type="match status" value="1"/>
</dbReference>
<dbReference type="Pfam" id="PF00164">
    <property type="entry name" value="Ribosom_S12_S23"/>
    <property type="match status" value="1"/>
</dbReference>
<dbReference type="PIRSF" id="PIRSF002133">
    <property type="entry name" value="Ribosomal_S12/S23"/>
    <property type="match status" value="1"/>
</dbReference>
<dbReference type="PRINTS" id="PR01034">
    <property type="entry name" value="RIBOSOMALS12"/>
</dbReference>
<dbReference type="SUPFAM" id="SSF50249">
    <property type="entry name" value="Nucleic acid-binding proteins"/>
    <property type="match status" value="1"/>
</dbReference>
<dbReference type="PROSITE" id="PS00055">
    <property type="entry name" value="RIBOSOMAL_S12"/>
    <property type="match status" value="1"/>
</dbReference>
<accession>B7L4L7</accession>
<name>RS12_ECO55</name>
<organism>
    <name type="scientific">Escherichia coli (strain 55989 / EAEC)</name>
    <dbReference type="NCBI Taxonomy" id="585055"/>
    <lineage>
        <taxon>Bacteria</taxon>
        <taxon>Pseudomonadati</taxon>
        <taxon>Pseudomonadota</taxon>
        <taxon>Gammaproteobacteria</taxon>
        <taxon>Enterobacterales</taxon>
        <taxon>Enterobacteriaceae</taxon>
        <taxon>Escherichia</taxon>
    </lineage>
</organism>
<proteinExistence type="inferred from homology"/>
<keyword id="KW-0007">Acetylation</keyword>
<keyword id="KW-0488">Methylation</keyword>
<keyword id="KW-1185">Reference proteome</keyword>
<keyword id="KW-0687">Ribonucleoprotein</keyword>
<keyword id="KW-0689">Ribosomal protein</keyword>
<keyword id="KW-0694">RNA-binding</keyword>
<keyword id="KW-0699">rRNA-binding</keyword>
<keyword id="KW-0820">tRNA-binding</keyword>
<feature type="chain" id="PRO_1000134634" description="Small ribosomal subunit protein uS12">
    <location>
        <begin position="1"/>
        <end position="124"/>
    </location>
</feature>
<feature type="modified residue" description="3-methylthioaspartic acid" evidence="1">
    <location>
        <position position="89"/>
    </location>
</feature>
<feature type="modified residue" description="N6-acetyllysine" evidence="2">
    <location>
        <position position="108"/>
    </location>
</feature>
<comment type="function">
    <text evidence="2">With S4 and S5 plays an important role in translational accuracy.</text>
</comment>
<comment type="function">
    <text evidence="2">Interacts with and stabilizes bases of the 16S rRNA that are involved in tRNA selection in the A site and with the mRNA backbone. Located at the interface of the 30S and 50S subunits, it traverses the body of the 30S subunit contacting proteins on the other side and probably holding the rRNA structure together. The combined cluster of proteins S8, S12 and S17 appears to hold together the shoulder and platform of the 30S subunit.</text>
</comment>
<comment type="subunit">
    <text evidence="2">Part of the 30S ribosomal subunit. Contacts proteins S8 and S17. May interact with IF1 in the 30S initiation complex.</text>
</comment>
<comment type="similarity">
    <text evidence="2">Belongs to the universal ribosomal protein uS12 family.</text>
</comment>
<reference key="1">
    <citation type="journal article" date="2009" name="PLoS Genet.">
        <title>Organised genome dynamics in the Escherichia coli species results in highly diverse adaptive paths.</title>
        <authorList>
            <person name="Touchon M."/>
            <person name="Hoede C."/>
            <person name="Tenaillon O."/>
            <person name="Barbe V."/>
            <person name="Baeriswyl S."/>
            <person name="Bidet P."/>
            <person name="Bingen E."/>
            <person name="Bonacorsi S."/>
            <person name="Bouchier C."/>
            <person name="Bouvet O."/>
            <person name="Calteau A."/>
            <person name="Chiapello H."/>
            <person name="Clermont O."/>
            <person name="Cruveiller S."/>
            <person name="Danchin A."/>
            <person name="Diard M."/>
            <person name="Dossat C."/>
            <person name="Karoui M.E."/>
            <person name="Frapy E."/>
            <person name="Garry L."/>
            <person name="Ghigo J.M."/>
            <person name="Gilles A.M."/>
            <person name="Johnson J."/>
            <person name="Le Bouguenec C."/>
            <person name="Lescat M."/>
            <person name="Mangenot S."/>
            <person name="Martinez-Jehanne V."/>
            <person name="Matic I."/>
            <person name="Nassif X."/>
            <person name="Oztas S."/>
            <person name="Petit M.A."/>
            <person name="Pichon C."/>
            <person name="Rouy Z."/>
            <person name="Ruf C.S."/>
            <person name="Schneider D."/>
            <person name="Tourret J."/>
            <person name="Vacherie B."/>
            <person name="Vallenet D."/>
            <person name="Medigue C."/>
            <person name="Rocha E.P.C."/>
            <person name="Denamur E."/>
        </authorList>
    </citation>
    <scope>NUCLEOTIDE SEQUENCE [LARGE SCALE GENOMIC DNA]</scope>
    <source>
        <strain>55989 / EAEC</strain>
    </source>
</reference>
<sequence length="124" mass="13737">MATVNQLVRKPRARKVAKSNVPALEACPQKRGVCTRVYTTTPKKPNSALRKVCRVRLTNGFEVTSYIGGEGHNLQEHSVILIRGGRVKDLPGVRYHTVRGALDCSGVKDRKQARSKYGVKRPKA</sequence>
<gene>
    <name evidence="2" type="primary">rpsL</name>
    <name type="ordered locus">EC55989_3745</name>
</gene>